<gene>
    <name evidence="1" type="primary">rbcL</name>
</gene>
<organism>
    <name type="scientific">Hippocratea richardiana</name>
    <dbReference type="NCBI Taxonomy" id="4318"/>
    <lineage>
        <taxon>Eukaryota</taxon>
        <taxon>Viridiplantae</taxon>
        <taxon>Streptophyta</taxon>
        <taxon>Embryophyta</taxon>
        <taxon>Tracheophyta</taxon>
        <taxon>Spermatophyta</taxon>
        <taxon>Magnoliopsida</taxon>
        <taxon>eudicotyledons</taxon>
        <taxon>Gunneridae</taxon>
        <taxon>Pentapetalae</taxon>
        <taxon>rosids</taxon>
        <taxon>fabids</taxon>
        <taxon>Celastrales</taxon>
        <taxon>Celastraceae</taxon>
        <taxon>Hippocrateoideae</taxon>
        <taxon>Hippocratea</taxon>
    </lineage>
</organism>
<accession>P31189</accession>
<comment type="function">
    <text evidence="1">RuBisCO catalyzes two reactions: the carboxylation of D-ribulose 1,5-bisphosphate, the primary event in carbon dioxide fixation, as well as the oxidative fragmentation of the pentose substrate in the photorespiration process. Both reactions occur simultaneously and in competition at the same active site.</text>
</comment>
<comment type="catalytic activity">
    <reaction evidence="1">
        <text>2 (2R)-3-phosphoglycerate + 2 H(+) = D-ribulose 1,5-bisphosphate + CO2 + H2O</text>
        <dbReference type="Rhea" id="RHEA:23124"/>
        <dbReference type="ChEBI" id="CHEBI:15377"/>
        <dbReference type="ChEBI" id="CHEBI:15378"/>
        <dbReference type="ChEBI" id="CHEBI:16526"/>
        <dbReference type="ChEBI" id="CHEBI:57870"/>
        <dbReference type="ChEBI" id="CHEBI:58272"/>
        <dbReference type="EC" id="4.1.1.39"/>
    </reaction>
</comment>
<comment type="catalytic activity">
    <reaction evidence="1">
        <text>D-ribulose 1,5-bisphosphate + O2 = 2-phosphoglycolate + (2R)-3-phosphoglycerate + 2 H(+)</text>
        <dbReference type="Rhea" id="RHEA:36631"/>
        <dbReference type="ChEBI" id="CHEBI:15378"/>
        <dbReference type="ChEBI" id="CHEBI:15379"/>
        <dbReference type="ChEBI" id="CHEBI:57870"/>
        <dbReference type="ChEBI" id="CHEBI:58033"/>
        <dbReference type="ChEBI" id="CHEBI:58272"/>
    </reaction>
</comment>
<comment type="cofactor">
    <cofactor evidence="1">
        <name>Mg(2+)</name>
        <dbReference type="ChEBI" id="CHEBI:18420"/>
    </cofactor>
    <text evidence="1">Binds 1 Mg(2+) ion per subunit.</text>
</comment>
<comment type="subunit">
    <text evidence="1">Heterohexadecamer of 8 large chains and 8 small chains; disulfide-linked. The disulfide link is formed within the large subunit homodimers.</text>
</comment>
<comment type="subcellular location">
    <subcellularLocation>
        <location>Plastid</location>
        <location>Chloroplast</location>
    </subcellularLocation>
</comment>
<comment type="PTM">
    <text evidence="1">The disulfide bond which can form in the large chain dimeric partners within the hexadecamer appears to be associated with oxidative stress and protein turnover.</text>
</comment>
<comment type="miscellaneous">
    <text evidence="1">The basic functional RuBisCO is composed of a large chain homodimer in a 'head-to-tail' conformation. In form I RuBisCO this homodimer is arranged in a barrel-like tetramer with the small subunits forming a tetrameric 'cap' on each end of the 'barrel'.</text>
</comment>
<comment type="similarity">
    <text evidence="1">Belongs to the RuBisCO large chain family. Type I subfamily.</text>
</comment>
<keyword id="KW-0007">Acetylation</keyword>
<keyword id="KW-0113">Calvin cycle</keyword>
<keyword id="KW-0120">Carbon dioxide fixation</keyword>
<keyword id="KW-0150">Chloroplast</keyword>
<keyword id="KW-1015">Disulfide bond</keyword>
<keyword id="KW-0456">Lyase</keyword>
<keyword id="KW-0460">Magnesium</keyword>
<keyword id="KW-0479">Metal-binding</keyword>
<keyword id="KW-0488">Methylation</keyword>
<keyword id="KW-0503">Monooxygenase</keyword>
<keyword id="KW-0560">Oxidoreductase</keyword>
<keyword id="KW-0601">Photorespiration</keyword>
<keyword id="KW-0602">Photosynthesis</keyword>
<keyword id="KW-0934">Plastid</keyword>
<evidence type="ECO:0000255" key="1">
    <source>
        <dbReference type="HAMAP-Rule" id="MF_01338"/>
    </source>
</evidence>
<protein>
    <recommendedName>
        <fullName evidence="1">Ribulose bisphosphate carboxylase large chain</fullName>
        <shortName evidence="1">RuBisCO large subunit</shortName>
        <ecNumber evidence="1">4.1.1.39</ecNumber>
    </recommendedName>
</protein>
<name>RBL_HIPRI</name>
<proteinExistence type="inferred from homology"/>
<feature type="propeptide" id="PRO_0000031249" evidence="1">
    <location>
        <begin position="1"/>
        <end position="2"/>
    </location>
</feature>
<feature type="chain" id="PRO_0000031250" description="Ribulose bisphosphate carboxylase large chain">
    <location>
        <begin position="3"/>
        <end position="449" status="greater than"/>
    </location>
</feature>
<feature type="active site" description="Proton acceptor" evidence="1">
    <location>
        <position position="175"/>
    </location>
</feature>
<feature type="active site" description="Proton acceptor" evidence="1">
    <location>
        <position position="294"/>
    </location>
</feature>
<feature type="binding site" description="in homodimeric partner" evidence="1">
    <location>
        <position position="123"/>
    </location>
    <ligand>
        <name>substrate</name>
    </ligand>
</feature>
<feature type="binding site" evidence="1">
    <location>
        <position position="173"/>
    </location>
    <ligand>
        <name>substrate</name>
    </ligand>
</feature>
<feature type="binding site" evidence="1">
    <location>
        <position position="177"/>
    </location>
    <ligand>
        <name>substrate</name>
    </ligand>
</feature>
<feature type="binding site" description="via carbamate group" evidence="1">
    <location>
        <position position="201"/>
    </location>
    <ligand>
        <name>Mg(2+)</name>
        <dbReference type="ChEBI" id="CHEBI:18420"/>
    </ligand>
</feature>
<feature type="binding site" evidence="1">
    <location>
        <position position="203"/>
    </location>
    <ligand>
        <name>Mg(2+)</name>
        <dbReference type="ChEBI" id="CHEBI:18420"/>
    </ligand>
</feature>
<feature type="binding site" evidence="1">
    <location>
        <position position="204"/>
    </location>
    <ligand>
        <name>Mg(2+)</name>
        <dbReference type="ChEBI" id="CHEBI:18420"/>
    </ligand>
</feature>
<feature type="binding site" evidence="1">
    <location>
        <position position="295"/>
    </location>
    <ligand>
        <name>substrate</name>
    </ligand>
</feature>
<feature type="binding site" evidence="1">
    <location>
        <position position="327"/>
    </location>
    <ligand>
        <name>substrate</name>
    </ligand>
</feature>
<feature type="binding site" evidence="1">
    <location>
        <position position="379"/>
    </location>
    <ligand>
        <name>substrate</name>
    </ligand>
</feature>
<feature type="site" description="Transition state stabilizer" evidence="1">
    <location>
        <position position="334"/>
    </location>
</feature>
<feature type="modified residue" description="N-acetylproline" evidence="1">
    <location>
        <position position="3"/>
    </location>
</feature>
<feature type="modified residue" description="N6,N6,N6-trimethyllysine" evidence="1">
    <location>
        <position position="14"/>
    </location>
</feature>
<feature type="modified residue" description="N6-carboxylysine" evidence="1">
    <location>
        <position position="201"/>
    </location>
</feature>
<feature type="disulfide bond" description="Interchain; in linked form" evidence="1">
    <location>
        <position position="247"/>
    </location>
</feature>
<feature type="non-terminal residue">
    <location>
        <position position="449"/>
    </location>
</feature>
<sequence>MSPQTETKASVGFKAGVKDYKLTYYTPDYETKDTDILAAFRVTPQPGVPPEEAGAAVAAESSTGTWTAVWTDGLTSLDRYKGRCYHIEPVAGEETQFIAYVAYPLDLFEEGSVTNMFTSIVGNAFGFKALRALRLEDLRIPTTYSKTFQGPPHGIQVERDKLNKYGRPLLGCTIKPKLGLSAKNYGRAVYECLRGGLDFTKDDENVNSQPFMRWRDRFLFCAEALYKAQAETGEIKGHYLNATAGTCEEMMKRAVFARELGVPIVMHDYLTGGFTANTSLAHYCRDNGLLLHIHRAMHAVIDRQKNHGMHFRVLAKALRMSGGDHIHAGTVVGKLEGERDITLGFVDLLRDDFIEKDRSRGIYFTQDWVSLPGVLPVASGGIHVWHMPALTEIFGDDAVLQFGGGTLGHPWGNAPGAVANRVALEACVQARNEGRDLAREGNEIIREAS</sequence>
<reference key="1">
    <citation type="submission" date="1995-04" db="EMBL/GenBank/DDBJ databases">
        <authorList>
            <person name="Savolainen V."/>
        </authorList>
    </citation>
    <scope>NUCLEOTIDE SEQUENCE [GENOMIC DNA]</scope>
    <source>
        <strain>Sample HRI5</strain>
    </source>
</reference>
<reference key="2">
    <citation type="journal article" date="1994" name="Mol. Phylogenet. Evol.">
        <title>Molecular phylogeny of families related to Celastrales based on rbcL 5' flanking sequences.</title>
        <authorList>
            <person name="Savolainen V."/>
            <person name="Manen J.F."/>
            <person name="Douzery E.J.P."/>
            <person name="Spichiger R."/>
        </authorList>
    </citation>
    <scope>NUCLEOTIDE SEQUENCE [GENOMIC DNA] OF 1-50</scope>
    <source>
        <strain>Sample HRI5</strain>
    </source>
</reference>
<dbReference type="EC" id="4.1.1.39" evidence="1"/>
<dbReference type="EMBL" id="X69740">
    <property type="protein sequence ID" value="CAA49395.3"/>
    <property type="molecule type" value="Genomic_DNA"/>
</dbReference>
<dbReference type="SMR" id="P31189"/>
<dbReference type="GO" id="GO:0009507">
    <property type="term" value="C:chloroplast"/>
    <property type="evidence" value="ECO:0007669"/>
    <property type="project" value="UniProtKB-SubCell"/>
</dbReference>
<dbReference type="GO" id="GO:0000287">
    <property type="term" value="F:magnesium ion binding"/>
    <property type="evidence" value="ECO:0007669"/>
    <property type="project" value="InterPro"/>
</dbReference>
<dbReference type="GO" id="GO:0004497">
    <property type="term" value="F:monooxygenase activity"/>
    <property type="evidence" value="ECO:0007669"/>
    <property type="project" value="UniProtKB-KW"/>
</dbReference>
<dbReference type="GO" id="GO:0016984">
    <property type="term" value="F:ribulose-bisphosphate carboxylase activity"/>
    <property type="evidence" value="ECO:0007669"/>
    <property type="project" value="UniProtKB-EC"/>
</dbReference>
<dbReference type="GO" id="GO:0009853">
    <property type="term" value="P:photorespiration"/>
    <property type="evidence" value="ECO:0007669"/>
    <property type="project" value="UniProtKB-KW"/>
</dbReference>
<dbReference type="GO" id="GO:0019253">
    <property type="term" value="P:reductive pentose-phosphate cycle"/>
    <property type="evidence" value="ECO:0007669"/>
    <property type="project" value="UniProtKB-KW"/>
</dbReference>
<dbReference type="CDD" id="cd08212">
    <property type="entry name" value="RuBisCO_large_I"/>
    <property type="match status" value="1"/>
</dbReference>
<dbReference type="FunFam" id="3.20.20.110:FF:000003">
    <property type="entry name" value="Ribulose bisphosphate carboxylase large chain"/>
    <property type="match status" value="1"/>
</dbReference>
<dbReference type="FunFam" id="3.30.70.150:FF:000001">
    <property type="entry name" value="Ribulose bisphosphate carboxylase large chain"/>
    <property type="match status" value="1"/>
</dbReference>
<dbReference type="Gene3D" id="3.20.20.110">
    <property type="entry name" value="Ribulose bisphosphate carboxylase, large subunit, C-terminal domain"/>
    <property type="match status" value="1"/>
</dbReference>
<dbReference type="Gene3D" id="3.30.70.150">
    <property type="entry name" value="RuBisCO large subunit, N-terminal domain"/>
    <property type="match status" value="1"/>
</dbReference>
<dbReference type="HAMAP" id="MF_01338">
    <property type="entry name" value="RuBisCO_L_type1"/>
    <property type="match status" value="1"/>
</dbReference>
<dbReference type="InterPro" id="IPR033966">
    <property type="entry name" value="RuBisCO"/>
</dbReference>
<dbReference type="InterPro" id="IPR020878">
    <property type="entry name" value="RuBisCo_large_chain_AS"/>
</dbReference>
<dbReference type="InterPro" id="IPR000685">
    <property type="entry name" value="RuBisCO_lsu_C"/>
</dbReference>
<dbReference type="InterPro" id="IPR036376">
    <property type="entry name" value="RuBisCO_lsu_C_sf"/>
</dbReference>
<dbReference type="InterPro" id="IPR017443">
    <property type="entry name" value="RuBisCO_lsu_fd_N"/>
</dbReference>
<dbReference type="InterPro" id="IPR036422">
    <property type="entry name" value="RuBisCO_lsu_N_sf"/>
</dbReference>
<dbReference type="InterPro" id="IPR020888">
    <property type="entry name" value="RuBisCO_lsuI"/>
</dbReference>
<dbReference type="NCBIfam" id="NF003252">
    <property type="entry name" value="PRK04208.1"/>
    <property type="match status" value="1"/>
</dbReference>
<dbReference type="PANTHER" id="PTHR42704">
    <property type="entry name" value="RIBULOSE BISPHOSPHATE CARBOXYLASE"/>
    <property type="match status" value="1"/>
</dbReference>
<dbReference type="PANTHER" id="PTHR42704:SF15">
    <property type="entry name" value="RIBULOSE BISPHOSPHATE CARBOXYLASE LARGE CHAIN"/>
    <property type="match status" value="1"/>
</dbReference>
<dbReference type="Pfam" id="PF00016">
    <property type="entry name" value="RuBisCO_large"/>
    <property type="match status" value="1"/>
</dbReference>
<dbReference type="Pfam" id="PF02788">
    <property type="entry name" value="RuBisCO_large_N"/>
    <property type="match status" value="1"/>
</dbReference>
<dbReference type="SFLD" id="SFLDG01052">
    <property type="entry name" value="RuBisCO"/>
    <property type="match status" value="1"/>
</dbReference>
<dbReference type="SFLD" id="SFLDS00014">
    <property type="entry name" value="RuBisCO"/>
    <property type="match status" value="1"/>
</dbReference>
<dbReference type="SFLD" id="SFLDG00301">
    <property type="entry name" value="RuBisCO-like_proteins"/>
    <property type="match status" value="1"/>
</dbReference>
<dbReference type="SUPFAM" id="SSF51649">
    <property type="entry name" value="RuBisCo, C-terminal domain"/>
    <property type="match status" value="1"/>
</dbReference>
<dbReference type="SUPFAM" id="SSF54966">
    <property type="entry name" value="RuBisCO, large subunit, small (N-terminal) domain"/>
    <property type="match status" value="1"/>
</dbReference>
<dbReference type="PROSITE" id="PS00157">
    <property type="entry name" value="RUBISCO_LARGE"/>
    <property type="match status" value="1"/>
</dbReference>
<geneLocation type="chloroplast"/>